<reference key="1">
    <citation type="journal article" date="2004" name="Nature">
        <title>DNA sequence and analysis of human chromosome 9.</title>
        <authorList>
            <person name="Humphray S.J."/>
            <person name="Oliver K."/>
            <person name="Hunt A.R."/>
            <person name="Plumb R.W."/>
            <person name="Loveland J.E."/>
            <person name="Howe K.L."/>
            <person name="Andrews T.D."/>
            <person name="Searle S."/>
            <person name="Hunt S.E."/>
            <person name="Scott C.E."/>
            <person name="Jones M.C."/>
            <person name="Ainscough R."/>
            <person name="Almeida J.P."/>
            <person name="Ambrose K.D."/>
            <person name="Ashwell R.I.S."/>
            <person name="Babbage A.K."/>
            <person name="Babbage S."/>
            <person name="Bagguley C.L."/>
            <person name="Bailey J."/>
            <person name="Banerjee R."/>
            <person name="Barker D.J."/>
            <person name="Barlow K.F."/>
            <person name="Bates K."/>
            <person name="Beasley H."/>
            <person name="Beasley O."/>
            <person name="Bird C.P."/>
            <person name="Bray-Allen S."/>
            <person name="Brown A.J."/>
            <person name="Brown J.Y."/>
            <person name="Burford D."/>
            <person name="Burrill W."/>
            <person name="Burton J."/>
            <person name="Carder C."/>
            <person name="Carter N.P."/>
            <person name="Chapman J.C."/>
            <person name="Chen Y."/>
            <person name="Clarke G."/>
            <person name="Clark S.Y."/>
            <person name="Clee C.M."/>
            <person name="Clegg S."/>
            <person name="Collier R.E."/>
            <person name="Corby N."/>
            <person name="Crosier M."/>
            <person name="Cummings A.T."/>
            <person name="Davies J."/>
            <person name="Dhami P."/>
            <person name="Dunn M."/>
            <person name="Dutta I."/>
            <person name="Dyer L.W."/>
            <person name="Earthrowl M.E."/>
            <person name="Faulkner L."/>
            <person name="Fleming C.J."/>
            <person name="Frankish A."/>
            <person name="Frankland J.A."/>
            <person name="French L."/>
            <person name="Fricker D.G."/>
            <person name="Garner P."/>
            <person name="Garnett J."/>
            <person name="Ghori J."/>
            <person name="Gilbert J.G.R."/>
            <person name="Glison C."/>
            <person name="Grafham D.V."/>
            <person name="Gribble S."/>
            <person name="Griffiths C."/>
            <person name="Griffiths-Jones S."/>
            <person name="Grocock R."/>
            <person name="Guy J."/>
            <person name="Hall R.E."/>
            <person name="Hammond S."/>
            <person name="Harley J.L."/>
            <person name="Harrison E.S.I."/>
            <person name="Hart E.A."/>
            <person name="Heath P.D."/>
            <person name="Henderson C.D."/>
            <person name="Hopkins B.L."/>
            <person name="Howard P.J."/>
            <person name="Howden P.J."/>
            <person name="Huckle E."/>
            <person name="Johnson C."/>
            <person name="Johnson D."/>
            <person name="Joy A.A."/>
            <person name="Kay M."/>
            <person name="Keenan S."/>
            <person name="Kershaw J.K."/>
            <person name="Kimberley A.M."/>
            <person name="King A."/>
            <person name="Knights A."/>
            <person name="Laird G.K."/>
            <person name="Langford C."/>
            <person name="Lawlor S."/>
            <person name="Leongamornlert D.A."/>
            <person name="Leversha M."/>
            <person name="Lloyd C."/>
            <person name="Lloyd D.M."/>
            <person name="Lovell J."/>
            <person name="Martin S."/>
            <person name="Mashreghi-Mohammadi M."/>
            <person name="Matthews L."/>
            <person name="McLaren S."/>
            <person name="McLay K.E."/>
            <person name="McMurray A."/>
            <person name="Milne S."/>
            <person name="Nickerson T."/>
            <person name="Nisbett J."/>
            <person name="Nordsiek G."/>
            <person name="Pearce A.V."/>
            <person name="Peck A.I."/>
            <person name="Porter K.M."/>
            <person name="Pandian R."/>
            <person name="Pelan S."/>
            <person name="Phillimore B."/>
            <person name="Povey S."/>
            <person name="Ramsey Y."/>
            <person name="Rand V."/>
            <person name="Scharfe M."/>
            <person name="Sehra H.K."/>
            <person name="Shownkeen R."/>
            <person name="Sims S.K."/>
            <person name="Skuce C.D."/>
            <person name="Smith M."/>
            <person name="Steward C.A."/>
            <person name="Swarbreck D."/>
            <person name="Sycamore N."/>
            <person name="Tester J."/>
            <person name="Thorpe A."/>
            <person name="Tracey A."/>
            <person name="Tromans A."/>
            <person name="Thomas D.W."/>
            <person name="Wall M."/>
            <person name="Wallis J.M."/>
            <person name="West A.P."/>
            <person name="Whitehead S.L."/>
            <person name="Willey D.L."/>
            <person name="Williams S.A."/>
            <person name="Wilming L."/>
            <person name="Wray P.W."/>
            <person name="Young L."/>
            <person name="Ashurst J.L."/>
            <person name="Coulson A."/>
            <person name="Blocker H."/>
            <person name="Durbin R.M."/>
            <person name="Sulston J.E."/>
            <person name="Hubbard T."/>
            <person name="Jackson M.J."/>
            <person name="Bentley D.R."/>
            <person name="Beck S."/>
            <person name="Rogers J."/>
            <person name="Dunham I."/>
        </authorList>
    </citation>
    <scope>NUCLEOTIDE SEQUENCE [LARGE SCALE GENOMIC DNA]</scope>
</reference>
<reference key="2">
    <citation type="journal article" date="2004" name="Genome Res.">
        <title>The status, quality, and expansion of the NIH full-length cDNA project: the Mammalian Gene Collection (MGC).</title>
        <authorList>
            <consortium name="The MGC Project Team"/>
        </authorList>
    </citation>
    <scope>NUCLEOTIDE SEQUENCE [LARGE SCALE MRNA] (ISOFORM 2)</scope>
    <source>
        <tissue>Brain</tissue>
    </source>
</reference>
<feature type="chain" id="PRO_0000285758" description="Phosphatidylinositol 4-phosphate 5-kinase-like protein 1">
    <location>
        <begin position="1"/>
        <end position="394"/>
    </location>
</feature>
<feature type="domain" description="PIPK" evidence="2">
    <location>
        <begin position="36"/>
        <end position="393"/>
    </location>
</feature>
<feature type="splice variant" id="VSP_024904" description="In isoform 2." evidence="3">
    <location>
        <begin position="1"/>
        <end position="203"/>
    </location>
</feature>
<gene>
    <name type="primary">PIP5KL1</name>
</gene>
<accession>Q5T9C9</accession>
<accession>Q8IVS3</accession>
<proteinExistence type="evidence at protein level"/>
<name>PI5L1_HUMAN</name>
<evidence type="ECO:0000250" key="1"/>
<evidence type="ECO:0000255" key="2">
    <source>
        <dbReference type="PROSITE-ProRule" id="PRU00781"/>
    </source>
</evidence>
<evidence type="ECO:0000303" key="3">
    <source>
    </source>
</evidence>
<evidence type="ECO:0000305" key="4"/>
<sequence length="394" mass="44572">MAAPSPGPREVLAPSPEAGCRAVTSSRRGLLWRLRDKQSRLGLFEISPGHELHGMTCMMQAGLWAATQVSMDHPPTGPPSRDDFSEVLTQVHEGFELGTLAGPAFAWLRRSLGLAEEDYQAALGPGGPYLQFLSTSKSKASFFLSHDQRFFLKTQGRREVQALLAHLPRYVQHLQRHPHSLLARLLGVHSLRVDRGKKTYFIVMQSVFYPAGRISERYDIKGCEVSRWVDPAPEGSPLVLVLKDLNFQGKTINLGPQRSWFLRQMELDTTFLRELNVLDYSLLIAFQRLHEDERGPGSSLIFRTARSVQGAQSPEESRAQNRRLLPDAPNALHILDGPEQRYFLGVVDLATVYGLRKRLEHLWKTLRYPGRTFSTVSPARYARRLCQWVEAHTE</sequence>
<organism>
    <name type="scientific">Homo sapiens</name>
    <name type="common">Human</name>
    <dbReference type="NCBI Taxonomy" id="9606"/>
    <lineage>
        <taxon>Eukaryota</taxon>
        <taxon>Metazoa</taxon>
        <taxon>Chordata</taxon>
        <taxon>Craniata</taxon>
        <taxon>Vertebrata</taxon>
        <taxon>Euteleostomi</taxon>
        <taxon>Mammalia</taxon>
        <taxon>Eutheria</taxon>
        <taxon>Euarchontoglires</taxon>
        <taxon>Primates</taxon>
        <taxon>Haplorrhini</taxon>
        <taxon>Catarrhini</taxon>
        <taxon>Hominidae</taxon>
        <taxon>Homo</taxon>
    </lineage>
</organism>
<comment type="function">
    <text evidence="1">May act as a scaffold to localize and regulate type I PI(4)P 5-kinases to specific compartments within the cell, where they generate PI(4,5)P2 for actin nucleation, signaling and scaffold protein recruitment and conversion to PI(3,4,5)P3.</text>
</comment>
<comment type="catalytic activity">
    <reaction>
        <text>a 1,2-diacyl-sn-glycero-3-phospho-(1D-myo-inositol 4-phosphate) + ATP = a 1,2-diacyl-sn-glycero-3-phospho-(1D-myo-inositol-4,5-bisphosphate) + ADP + H(+)</text>
        <dbReference type="Rhea" id="RHEA:14425"/>
        <dbReference type="ChEBI" id="CHEBI:15378"/>
        <dbReference type="ChEBI" id="CHEBI:30616"/>
        <dbReference type="ChEBI" id="CHEBI:58178"/>
        <dbReference type="ChEBI" id="CHEBI:58456"/>
        <dbReference type="ChEBI" id="CHEBI:456216"/>
        <dbReference type="EC" id="2.7.1.68"/>
    </reaction>
</comment>
<comment type="subunit">
    <text evidence="1">Heterodimerizes with other type I phosphatidylinositol 4-phosphate 5-kinase.</text>
</comment>
<comment type="subcellular location">
    <subcellularLocation>
        <location>Cytoplasm</location>
    </subcellularLocation>
    <subcellularLocation>
        <location>Membrane</location>
    </subcellularLocation>
    <text evidence="1">Localized to large cytoplasmic vesicular structures.</text>
</comment>
<comment type="alternative products">
    <event type="alternative splicing"/>
    <isoform>
        <id>Q5T9C9-1</id>
        <name>1</name>
        <sequence type="displayed"/>
    </isoform>
    <isoform>
        <id>Q5T9C9-2</id>
        <name>2</name>
        <sequence type="described" ref="VSP_024904"/>
    </isoform>
</comment>
<comment type="caution">
    <text evidence="4">It is unsure if the enzyme has intrinsic kinase activity.</text>
</comment>
<keyword id="KW-0025">Alternative splicing</keyword>
<keyword id="KW-0067">ATP-binding</keyword>
<keyword id="KW-0963">Cytoplasm</keyword>
<keyword id="KW-0418">Kinase</keyword>
<keyword id="KW-0443">Lipid metabolism</keyword>
<keyword id="KW-0472">Membrane</keyword>
<keyword id="KW-0547">Nucleotide-binding</keyword>
<keyword id="KW-1267">Proteomics identification</keyword>
<keyword id="KW-1185">Reference proteome</keyword>
<keyword id="KW-0808">Transferase</keyword>
<protein>
    <recommendedName>
        <fullName>Phosphatidylinositol 4-phosphate 5-kinase-like protein 1</fullName>
        <shortName>PI(4)P 5-kinase-like protein 1</shortName>
        <shortName>PtdIns(4)P-5-kinase-like protein 1</shortName>
        <ecNumber>2.7.1.68</ecNumber>
    </recommendedName>
</protein>
<dbReference type="EC" id="2.7.1.68"/>
<dbReference type="EMBL" id="AL157935">
    <property type="status" value="NOT_ANNOTATED_CDS"/>
    <property type="molecule type" value="Genomic_DNA"/>
</dbReference>
<dbReference type="EMBL" id="BC042184">
    <property type="protein sequence ID" value="AAH42184.1"/>
    <property type="molecule type" value="mRNA"/>
</dbReference>
<dbReference type="CCDS" id="CCDS48030.1">
    <molecule id="Q5T9C9-1"/>
</dbReference>
<dbReference type="CCDS" id="CCDS6885.1">
    <molecule id="Q5T9C9-2"/>
</dbReference>
<dbReference type="RefSeq" id="NP_001128691.1">
    <molecule id="Q5T9C9-1"/>
    <property type="nucleotide sequence ID" value="NM_001135219.2"/>
</dbReference>
<dbReference type="RefSeq" id="NP_775763.1">
    <molecule id="Q5T9C9-2"/>
    <property type="nucleotide sequence ID" value="NM_173492.2"/>
</dbReference>
<dbReference type="RefSeq" id="XP_054217965.1">
    <molecule id="Q5T9C9-1"/>
    <property type="nucleotide sequence ID" value="XM_054361990.1"/>
</dbReference>
<dbReference type="SMR" id="Q5T9C9"/>
<dbReference type="BioGRID" id="126513">
    <property type="interactions" value="5"/>
</dbReference>
<dbReference type="FunCoup" id="Q5T9C9">
    <property type="interactions" value="741"/>
</dbReference>
<dbReference type="IntAct" id="Q5T9C9">
    <property type="interactions" value="2"/>
</dbReference>
<dbReference type="STRING" id="9606.ENSP00000373399"/>
<dbReference type="iPTMnet" id="Q5T9C9"/>
<dbReference type="PhosphoSitePlus" id="Q5T9C9"/>
<dbReference type="BioMuta" id="PIP5KL1"/>
<dbReference type="DMDM" id="146325056"/>
<dbReference type="MassIVE" id="Q5T9C9"/>
<dbReference type="PaxDb" id="9606-ENSP00000373399"/>
<dbReference type="PeptideAtlas" id="Q5T9C9"/>
<dbReference type="ProteomicsDB" id="64791">
    <molecule id="Q5T9C9-1"/>
</dbReference>
<dbReference type="ProteomicsDB" id="64792">
    <molecule id="Q5T9C9-2"/>
</dbReference>
<dbReference type="Antibodypedia" id="30919">
    <property type="antibodies" value="138 antibodies from 26 providers"/>
</dbReference>
<dbReference type="DNASU" id="138429"/>
<dbReference type="Ensembl" id="ENST00000300432.3">
    <molecule id="Q5T9C9-2"/>
    <property type="protein sequence ID" value="ENSP00000300432.3"/>
    <property type="gene ID" value="ENSG00000167103.12"/>
</dbReference>
<dbReference type="Ensembl" id="ENST00000388747.9">
    <molecule id="Q5T9C9-1"/>
    <property type="protein sequence ID" value="ENSP00000373399.4"/>
    <property type="gene ID" value="ENSG00000167103.12"/>
</dbReference>
<dbReference type="GeneID" id="138429"/>
<dbReference type="KEGG" id="hsa:138429"/>
<dbReference type="MANE-Select" id="ENST00000388747.9">
    <property type="protein sequence ID" value="ENSP00000373399.4"/>
    <property type="RefSeq nucleotide sequence ID" value="NM_001135219.2"/>
    <property type="RefSeq protein sequence ID" value="NP_001128691.1"/>
</dbReference>
<dbReference type="UCSC" id="uc004bsu.3">
    <molecule id="Q5T9C9-1"/>
    <property type="organism name" value="human"/>
</dbReference>
<dbReference type="AGR" id="HGNC:28711"/>
<dbReference type="CTD" id="138429"/>
<dbReference type="DisGeNET" id="138429"/>
<dbReference type="GeneCards" id="PIP5KL1"/>
<dbReference type="HGNC" id="HGNC:28711">
    <property type="gene designation" value="PIP5KL1"/>
</dbReference>
<dbReference type="HPA" id="ENSG00000167103">
    <property type="expression patterns" value="Low tissue specificity"/>
</dbReference>
<dbReference type="MIM" id="612865">
    <property type="type" value="gene"/>
</dbReference>
<dbReference type="neXtProt" id="NX_Q5T9C9"/>
<dbReference type="OpenTargets" id="ENSG00000167103"/>
<dbReference type="PharmGKB" id="PA134926015"/>
<dbReference type="VEuPathDB" id="HostDB:ENSG00000167103"/>
<dbReference type="eggNOG" id="KOG0229">
    <property type="taxonomic scope" value="Eukaryota"/>
</dbReference>
<dbReference type="GeneTree" id="ENSGT00940000158633"/>
<dbReference type="HOGENOM" id="CLU_043959_0_0_1"/>
<dbReference type="InParanoid" id="Q5T9C9"/>
<dbReference type="OMA" id="AYDIKGC"/>
<dbReference type="OrthoDB" id="20783at2759"/>
<dbReference type="PAN-GO" id="Q5T9C9">
    <property type="GO annotations" value="3 GO annotations based on evolutionary models"/>
</dbReference>
<dbReference type="PhylomeDB" id="Q5T9C9"/>
<dbReference type="TreeFam" id="TF354315"/>
<dbReference type="PathwayCommons" id="Q5T9C9"/>
<dbReference type="SignaLink" id="Q5T9C9"/>
<dbReference type="BioGRID-ORCS" id="138429">
    <property type="hits" value="13 hits in 1152 CRISPR screens"/>
</dbReference>
<dbReference type="ChiTaRS" id="PIP5KL1">
    <property type="organism name" value="human"/>
</dbReference>
<dbReference type="GenomeRNAi" id="138429"/>
<dbReference type="Pharos" id="Q5T9C9">
    <property type="development level" value="Tbio"/>
</dbReference>
<dbReference type="PRO" id="PR:Q5T9C9"/>
<dbReference type="Proteomes" id="UP000005640">
    <property type="component" value="Chromosome 9"/>
</dbReference>
<dbReference type="RNAct" id="Q5T9C9">
    <property type="molecule type" value="protein"/>
</dbReference>
<dbReference type="Bgee" id="ENSG00000167103">
    <property type="expression patterns" value="Expressed in lower esophagus mucosa and 103 other cell types or tissues"/>
</dbReference>
<dbReference type="GO" id="GO:0042995">
    <property type="term" value="C:cell projection"/>
    <property type="evidence" value="ECO:0007669"/>
    <property type="project" value="Ensembl"/>
</dbReference>
<dbReference type="GO" id="GO:0005829">
    <property type="term" value="C:cytosol"/>
    <property type="evidence" value="ECO:0000314"/>
    <property type="project" value="HPA"/>
</dbReference>
<dbReference type="GO" id="GO:0005886">
    <property type="term" value="C:plasma membrane"/>
    <property type="evidence" value="ECO:0000318"/>
    <property type="project" value="GO_Central"/>
</dbReference>
<dbReference type="GO" id="GO:0016308">
    <property type="term" value="F:1-phosphatidylinositol-4-phosphate 5-kinase activity"/>
    <property type="evidence" value="ECO:0000318"/>
    <property type="project" value="GO_Central"/>
</dbReference>
<dbReference type="GO" id="GO:0005524">
    <property type="term" value="F:ATP binding"/>
    <property type="evidence" value="ECO:0007669"/>
    <property type="project" value="UniProtKB-KW"/>
</dbReference>
<dbReference type="GO" id="GO:0030336">
    <property type="term" value="P:negative regulation of cell migration"/>
    <property type="evidence" value="ECO:0000315"/>
    <property type="project" value="ARUK-UCL"/>
</dbReference>
<dbReference type="GO" id="GO:0010917">
    <property type="term" value="P:negative regulation of mitochondrial membrane potential"/>
    <property type="evidence" value="ECO:0000314"/>
    <property type="project" value="UniProtKB"/>
</dbReference>
<dbReference type="GO" id="GO:0051898">
    <property type="term" value="P:negative regulation of phosphatidylinositol 3-kinase/protein kinase B signal transduction"/>
    <property type="evidence" value="ECO:0000315"/>
    <property type="project" value="ARUK-UCL"/>
</dbReference>
<dbReference type="GO" id="GO:0046854">
    <property type="term" value="P:phosphatidylinositol phosphate biosynthetic process"/>
    <property type="evidence" value="ECO:0000318"/>
    <property type="project" value="GO_Central"/>
</dbReference>
<dbReference type="GO" id="GO:0043065">
    <property type="term" value="P:positive regulation of apoptotic process"/>
    <property type="evidence" value="ECO:0000314"/>
    <property type="project" value="UniProtKB"/>
</dbReference>
<dbReference type="CDD" id="cd17304">
    <property type="entry name" value="PIPKc_PIP5KL1"/>
    <property type="match status" value="1"/>
</dbReference>
<dbReference type="FunFam" id="3.30.800.10:FF:000011">
    <property type="entry name" value="Phosphatidylinositol 4-phosphate 5-kinase-like protein 1"/>
    <property type="match status" value="1"/>
</dbReference>
<dbReference type="FunFam" id="3.30.810.10:FF:000006">
    <property type="entry name" value="Phosphatidylinositol 4-phosphate 5-kinase-like protein 1"/>
    <property type="match status" value="1"/>
</dbReference>
<dbReference type="Gene3D" id="3.30.810.10">
    <property type="entry name" value="2-Layer Sandwich"/>
    <property type="match status" value="1"/>
</dbReference>
<dbReference type="Gene3D" id="3.30.800.10">
    <property type="entry name" value="Phosphatidylinositol Phosphate Kinase II Beta"/>
    <property type="match status" value="1"/>
</dbReference>
<dbReference type="InterPro" id="IPR027483">
    <property type="entry name" value="PInositol-4-P-4/5-kinase_C_sf"/>
</dbReference>
<dbReference type="InterPro" id="IPR002498">
    <property type="entry name" value="PInositol-4-P-4/5-kinase_core"/>
</dbReference>
<dbReference type="InterPro" id="IPR027484">
    <property type="entry name" value="PInositol-4-P-5-kinase_N"/>
</dbReference>
<dbReference type="InterPro" id="IPR023610">
    <property type="entry name" value="PInositol-4/5-P-5/4-kinase"/>
</dbReference>
<dbReference type="PANTHER" id="PTHR23086:SF46">
    <property type="entry name" value="PHOSPHATIDYLINOSITOL 4-PHOSPHATE 5-KINASE-LIKE PROTEIN 1"/>
    <property type="match status" value="1"/>
</dbReference>
<dbReference type="PANTHER" id="PTHR23086">
    <property type="entry name" value="PHOSPHATIDYLINOSITOL-4-PHOSPHATE 5-KINASE"/>
    <property type="match status" value="1"/>
</dbReference>
<dbReference type="Pfam" id="PF01504">
    <property type="entry name" value="PIP5K"/>
    <property type="match status" value="1"/>
</dbReference>
<dbReference type="SMART" id="SM00330">
    <property type="entry name" value="PIPKc"/>
    <property type="match status" value="1"/>
</dbReference>
<dbReference type="SUPFAM" id="SSF56104">
    <property type="entry name" value="SAICAR synthase-like"/>
    <property type="match status" value="1"/>
</dbReference>
<dbReference type="PROSITE" id="PS51455">
    <property type="entry name" value="PIPK"/>
    <property type="match status" value="1"/>
</dbReference>